<organism>
    <name type="scientific">Phaeodactylum tricornutum (strain CCAP 1055/1)</name>
    <dbReference type="NCBI Taxonomy" id="556484"/>
    <lineage>
        <taxon>Eukaryota</taxon>
        <taxon>Sar</taxon>
        <taxon>Stramenopiles</taxon>
        <taxon>Ochrophyta</taxon>
        <taxon>Bacillariophyta</taxon>
        <taxon>Bacillariophyceae</taxon>
        <taxon>Bacillariophycidae</taxon>
        <taxon>Naviculales</taxon>
        <taxon>Phaeodactylaceae</taxon>
        <taxon>Phaeodactylum</taxon>
    </lineage>
</organism>
<gene>
    <name type="primary">tsf</name>
</gene>
<proteinExistence type="inferred from homology"/>
<sequence>MKTEIDAKTVKKLRDETGAGMMTCKQALTENHGDYDKAIESLRLKGMATADKKSSRNTNEGLIYSYIHTGSKLGILLEINCETDFVARREEFTDLAKNISMQIASNPEIQVVSLDDISDLTKIEVRKFENAKDDLQNKPEEIKNKIVEGRVEKSLKKQVLLEQEYIRDPNITVTEYIKQVVSILGENIRVQRFTRYVLGEID</sequence>
<reference key="1">
    <citation type="journal article" date="2007" name="Mol. Genet. Genomics">
        <title>Chloroplast genomes of the diatoms Phaeodactylum tricornutum and Thalassiosira pseudonana: comparison with other plastid genomes of the red lineage.</title>
        <authorList>
            <person name="Oudot-Le Secq M.-P."/>
            <person name="Grimwood J."/>
            <person name="Shapiro H."/>
            <person name="Armbrust E.V."/>
            <person name="Bowler C."/>
            <person name="Green B.R."/>
        </authorList>
    </citation>
    <scope>NUCLEOTIDE SEQUENCE [LARGE SCALE GENOMIC DNA]</scope>
    <source>
        <strain>CCAP 1055/1</strain>
    </source>
</reference>
<accession>Q9TK50</accession>
<accession>Q5PYA0</accession>
<geneLocation type="chloroplast"/>
<feature type="chain" id="PRO_0000161249" description="Elongation factor Ts, chloroplastic">
    <location>
        <begin position="1"/>
        <end position="202"/>
    </location>
</feature>
<evidence type="ECO:0000255" key="1">
    <source>
        <dbReference type="HAMAP-Rule" id="MF_03135"/>
    </source>
</evidence>
<keyword id="KW-0150">Chloroplast</keyword>
<keyword id="KW-0251">Elongation factor</keyword>
<keyword id="KW-0934">Plastid</keyword>
<keyword id="KW-0648">Protein biosynthesis</keyword>
<keyword id="KW-1185">Reference proteome</keyword>
<comment type="function">
    <text evidence="1">Associates with the EF-Tu.GDP complex and induces the exchange of GDP to GTP. It remains bound to the aminoacyl-tRNA.EF-Tu.GTP complex up to the GTP hydrolysis stage on the ribosome.</text>
</comment>
<comment type="subcellular location">
    <subcellularLocation>
        <location>Plastid</location>
        <location>Chloroplast</location>
    </subcellularLocation>
</comment>
<comment type="similarity">
    <text evidence="1">Belongs to the EF-Ts family.</text>
</comment>
<name>EFTS_PHATC</name>
<dbReference type="EMBL" id="EF067920">
    <property type="protein sequence ID" value="ABK20639.1"/>
    <property type="molecule type" value="Genomic_DNA"/>
</dbReference>
<dbReference type="RefSeq" id="YP_874416.1">
    <property type="nucleotide sequence ID" value="NC_008588.1"/>
</dbReference>
<dbReference type="SMR" id="Q9TK50"/>
<dbReference type="STRING" id="556484.Q9TK50"/>
<dbReference type="GeneID" id="4524591"/>
<dbReference type="InParanoid" id="Q9TK50"/>
<dbReference type="Proteomes" id="UP000000759">
    <property type="component" value="Chloroplast"/>
</dbReference>
<dbReference type="GO" id="GO:0009507">
    <property type="term" value="C:chloroplast"/>
    <property type="evidence" value="ECO:0007669"/>
    <property type="project" value="UniProtKB-SubCell"/>
</dbReference>
<dbReference type="GO" id="GO:0005739">
    <property type="term" value="C:mitochondrion"/>
    <property type="evidence" value="ECO:0007669"/>
    <property type="project" value="UniProtKB-UniRule"/>
</dbReference>
<dbReference type="GO" id="GO:0003746">
    <property type="term" value="F:translation elongation factor activity"/>
    <property type="evidence" value="ECO:0007669"/>
    <property type="project" value="UniProtKB-UniRule"/>
</dbReference>
<dbReference type="CDD" id="cd14275">
    <property type="entry name" value="UBA_EF-Ts"/>
    <property type="match status" value="1"/>
</dbReference>
<dbReference type="FunFam" id="1.10.8.10:FF:000001">
    <property type="entry name" value="Elongation factor Ts"/>
    <property type="match status" value="1"/>
</dbReference>
<dbReference type="Gene3D" id="1.10.286.20">
    <property type="match status" value="1"/>
</dbReference>
<dbReference type="Gene3D" id="1.10.8.10">
    <property type="entry name" value="DNA helicase RuvA subunit, C-terminal domain"/>
    <property type="match status" value="1"/>
</dbReference>
<dbReference type="Gene3D" id="3.30.479.20">
    <property type="entry name" value="Elongation factor Ts, dimerisation domain"/>
    <property type="match status" value="1"/>
</dbReference>
<dbReference type="HAMAP" id="MF_00050">
    <property type="entry name" value="EF_Ts"/>
    <property type="match status" value="1"/>
</dbReference>
<dbReference type="InterPro" id="IPR036402">
    <property type="entry name" value="EF-Ts_dimer_sf"/>
</dbReference>
<dbReference type="InterPro" id="IPR001816">
    <property type="entry name" value="Transl_elong_EFTs/EF1B"/>
</dbReference>
<dbReference type="InterPro" id="IPR014039">
    <property type="entry name" value="Transl_elong_EFTs/EF1B_dimer"/>
</dbReference>
<dbReference type="InterPro" id="IPR018101">
    <property type="entry name" value="Transl_elong_Ts_CS"/>
</dbReference>
<dbReference type="InterPro" id="IPR009060">
    <property type="entry name" value="UBA-like_sf"/>
</dbReference>
<dbReference type="NCBIfam" id="TIGR00116">
    <property type="entry name" value="tsf"/>
    <property type="match status" value="1"/>
</dbReference>
<dbReference type="PANTHER" id="PTHR11741">
    <property type="entry name" value="ELONGATION FACTOR TS"/>
    <property type="match status" value="1"/>
</dbReference>
<dbReference type="PANTHER" id="PTHR11741:SF0">
    <property type="entry name" value="ELONGATION FACTOR TS, MITOCHONDRIAL"/>
    <property type="match status" value="1"/>
</dbReference>
<dbReference type="Pfam" id="PF00889">
    <property type="entry name" value="EF_TS"/>
    <property type="match status" value="1"/>
</dbReference>
<dbReference type="SUPFAM" id="SSF54713">
    <property type="entry name" value="Elongation factor Ts (EF-Ts), dimerisation domain"/>
    <property type="match status" value="1"/>
</dbReference>
<dbReference type="SUPFAM" id="SSF46934">
    <property type="entry name" value="UBA-like"/>
    <property type="match status" value="1"/>
</dbReference>
<dbReference type="PROSITE" id="PS01127">
    <property type="entry name" value="EF_TS_2"/>
    <property type="match status" value="1"/>
</dbReference>
<protein>
    <recommendedName>
        <fullName>Elongation factor Ts, chloroplastic</fullName>
        <shortName evidence="1">EF-Ts</shortName>
    </recommendedName>
</protein>